<evidence type="ECO:0000250" key="1"/>
<evidence type="ECO:0000250" key="2">
    <source>
        <dbReference type="UniProtKB" id="O09114"/>
    </source>
</evidence>
<evidence type="ECO:0000250" key="3">
    <source>
        <dbReference type="UniProtKB" id="P41222"/>
    </source>
</evidence>
<evidence type="ECO:0000269" key="4">
    <source>
    </source>
</evidence>
<evidence type="ECO:0000269" key="5">
    <source>
    </source>
</evidence>
<evidence type="ECO:0000269" key="6">
    <source>
    </source>
</evidence>
<evidence type="ECO:0000269" key="7">
    <source>
    </source>
</evidence>
<evidence type="ECO:0000305" key="8"/>
<comment type="function">
    <text evidence="1 2 3 5">Catalyzes the conversion of PGH2 to PGD2, a prostaglandin involved in smooth muscle contraction/relaxation and a potent inhibitor of platelet aggregation. Involved in a variety of CNS functions, such as sedation, NREM sleep and PGE2-induced allodynia, and may have an anti-apoptotic role in oligodendrocytes. Binds small non-substrate lipophilic molecules, including biliverdin, bilirubin, retinal, retinoic acid and thyroid hormone, and may act as a scavenger for harmful hydrophobic molecules and as a secretory retinoid and thyroid hormone transporter. Possibly involved in development and maintenance of the blood-brain, blood-retina, blood-aqueous humor and blood-testis barrier. It is likely to play important roles in both maturation and maintenance of the central nervous system and male reproductive system (By similarity). Involved in PLA2G3-dependent maturation of mast cells. PLA2G3 is secreted by immature mast cells and acts on nearby fibroblasts upstream to PTDGS to synthesize PGD2, which in turn promotes mast cell maturation and degranulation via PTGDR (By similarity).</text>
</comment>
<comment type="catalytic activity">
    <reaction evidence="3">
        <text>prostaglandin H2 = prostaglandin D2</text>
        <dbReference type="Rhea" id="RHEA:10600"/>
        <dbReference type="ChEBI" id="CHEBI:57405"/>
        <dbReference type="ChEBI" id="CHEBI:57406"/>
        <dbReference type="EC" id="5.3.99.2"/>
    </reaction>
</comment>
<comment type="subunit">
    <text evidence="3">Monomer.</text>
</comment>
<comment type="subcellular location">
    <subcellularLocation>
        <location evidence="3">Rough endoplasmic reticulum</location>
    </subcellularLocation>
    <subcellularLocation>
        <location evidence="3">Nucleus membrane</location>
    </subcellularLocation>
    <subcellularLocation>
        <location evidence="3">Golgi apparatus</location>
    </subcellularLocation>
    <subcellularLocation>
        <location evidence="3">Cytoplasm</location>
        <location evidence="3">Perinuclear region</location>
    </subcellularLocation>
    <subcellularLocation>
        <location evidence="3">Secreted</location>
    </subcellularLocation>
    <text evidence="3">Detected on rough endoplasmic reticulum of arachnoid and menigioma cells. Localized to the nuclear envelope, Golgi apparatus, secretory vesicles and spherical cytoplasmic structures in arachnoid trabecular cells, and to circular cytoplasmic structures in meningeal macrophages and perivascular microglial cells. In oligodendrocytes, localized to the rough endoplasmic reticulum and nuclear envelope. In retinal pigment epithelial cells, localized to distinct cytoplasmic domains including the perinuclear region. Also secreted.</text>
</comment>
<comment type="tissue specificity">
    <text evidence="4 6 7">In the male reproductive system, it is expressed in the testis and epididymis, and is secreted into the seminal fluid.</text>
</comment>
<comment type="domain">
    <text evidence="3">Forms a beta-barrel structure that accommodates hydrophobic ligands in its interior.</text>
</comment>
<comment type="similarity">
    <text evidence="8">Belongs to the calycin superfamily. Lipocalin family.</text>
</comment>
<name>PTGDS_SHEEP</name>
<feature type="signal peptide" evidence="3">
    <location>
        <begin position="1"/>
        <end position="24"/>
    </location>
</feature>
<feature type="chain" id="PRO_0000017951" description="Prostaglandin-H2 D-isomerase">
    <location>
        <begin position="25"/>
        <end position="191"/>
    </location>
</feature>
<feature type="active site" description="Nucleophile" evidence="3">
    <location>
        <position position="65"/>
    </location>
</feature>
<feature type="glycosylation site" description="N-linked (GlcNAc...) asparagine" evidence="1">
    <location>
        <position position="51"/>
    </location>
</feature>
<feature type="glycosylation site" description="N-linked (GlcNAc...) asparagine" evidence="1">
    <location>
        <position position="78"/>
    </location>
</feature>
<feature type="disulfide bond" evidence="2">
    <location>
        <begin position="89"/>
        <end position="186"/>
    </location>
</feature>
<gene>
    <name type="primary">PTGDS</name>
</gene>
<proteinExistence type="evidence at protein level"/>
<accession>Q9XSM0</accession>
<protein>
    <recommendedName>
        <fullName>Prostaglandin-H2 D-isomerase</fullName>
        <ecNumber evidence="3">5.3.99.2</ecNumber>
    </recommendedName>
    <alternativeName>
        <fullName>Glutathione-independent PGD synthase</fullName>
    </alternativeName>
    <alternativeName>
        <fullName>Lipocalin-type prostaglandin-D synthase</fullName>
    </alternativeName>
    <alternativeName>
        <fullName>Prostaglandin-D2 synthase</fullName>
        <shortName>PGD2 synthase</shortName>
        <shortName>PGDS</shortName>
        <shortName>PGDS2</shortName>
    </alternativeName>
</protein>
<sequence>MATPNRPWMGLLLLGVLGVLQTPAPTEAALQPNFEEDKFLGRWFTSGLASNSSWFLEKRKVLSMCKSEVAPAADGGLNVTSTFLRKDQCETRTLLLRPAGPPGCYSYTSPHWSSTHEVSVAETDYETYALLYTESVRGPGPDSLMATLYSRTQTPRAEVKEKFTTFARSLGFTEEGIVFLPKTDKCMEVRT</sequence>
<organism>
    <name type="scientific">Ovis aries</name>
    <name type="common">Sheep</name>
    <dbReference type="NCBI Taxonomy" id="9940"/>
    <lineage>
        <taxon>Eukaryota</taxon>
        <taxon>Metazoa</taxon>
        <taxon>Chordata</taxon>
        <taxon>Craniata</taxon>
        <taxon>Vertebrata</taxon>
        <taxon>Euteleostomi</taxon>
        <taxon>Mammalia</taxon>
        <taxon>Eutheria</taxon>
        <taxon>Laurasiatheria</taxon>
        <taxon>Artiodactyla</taxon>
        <taxon>Ruminantia</taxon>
        <taxon>Pecora</taxon>
        <taxon>Bovidae</taxon>
        <taxon>Caprinae</taxon>
        <taxon>Ovis</taxon>
    </lineage>
</organism>
<keyword id="KW-0963">Cytoplasm</keyword>
<keyword id="KW-0903">Direct protein sequencing</keyword>
<keyword id="KW-1015">Disulfide bond</keyword>
<keyword id="KW-0256">Endoplasmic reticulum</keyword>
<keyword id="KW-0275">Fatty acid biosynthesis</keyword>
<keyword id="KW-0276">Fatty acid metabolism</keyword>
<keyword id="KW-0325">Glycoprotein</keyword>
<keyword id="KW-0333">Golgi apparatus</keyword>
<keyword id="KW-0413">Isomerase</keyword>
<keyword id="KW-0444">Lipid biosynthesis</keyword>
<keyword id="KW-0443">Lipid metabolism</keyword>
<keyword id="KW-0467">Mast cell degranulation</keyword>
<keyword id="KW-0472">Membrane</keyword>
<keyword id="KW-0539">Nucleus</keyword>
<keyword id="KW-0643">Prostaglandin biosynthesis</keyword>
<keyword id="KW-0644">Prostaglandin metabolism</keyword>
<keyword id="KW-1185">Reference proteome</keyword>
<keyword id="KW-0964">Secreted</keyword>
<keyword id="KW-0732">Signal</keyword>
<keyword id="KW-0813">Transport</keyword>
<dbReference type="EC" id="5.3.99.2" evidence="3"/>
<dbReference type="EMBL" id="AJ133642">
    <property type="protein sequence ID" value="CAB40371.1"/>
    <property type="molecule type" value="mRNA"/>
</dbReference>
<dbReference type="RefSeq" id="NP_001009257.1">
    <property type="nucleotide sequence ID" value="NM_001009257.2"/>
</dbReference>
<dbReference type="SMR" id="Q9XSM0"/>
<dbReference type="GlyCosmos" id="Q9XSM0">
    <property type="glycosylation" value="2 sites, No reported glycans"/>
</dbReference>
<dbReference type="GeneID" id="443192"/>
<dbReference type="KEGG" id="oas:443192"/>
<dbReference type="CTD" id="5730"/>
<dbReference type="OrthoDB" id="9048943at2759"/>
<dbReference type="Proteomes" id="UP000002356">
    <property type="component" value="Unplaced"/>
</dbReference>
<dbReference type="GO" id="GO:0005576">
    <property type="term" value="C:extracellular region"/>
    <property type="evidence" value="ECO:0000314"/>
    <property type="project" value="UniProtKB"/>
</dbReference>
<dbReference type="GO" id="GO:0005615">
    <property type="term" value="C:extracellular space"/>
    <property type="evidence" value="ECO:0007669"/>
    <property type="project" value="TreeGrafter"/>
</dbReference>
<dbReference type="GO" id="GO:0005794">
    <property type="term" value="C:Golgi apparatus"/>
    <property type="evidence" value="ECO:0000250"/>
    <property type="project" value="UniProtKB"/>
</dbReference>
<dbReference type="GO" id="GO:0031965">
    <property type="term" value="C:nuclear membrane"/>
    <property type="evidence" value="ECO:0007669"/>
    <property type="project" value="UniProtKB-SubCell"/>
</dbReference>
<dbReference type="GO" id="GO:0048471">
    <property type="term" value="C:perinuclear region of cytoplasm"/>
    <property type="evidence" value="ECO:0007669"/>
    <property type="project" value="UniProtKB-SubCell"/>
</dbReference>
<dbReference type="GO" id="GO:0005791">
    <property type="term" value="C:rough endoplasmic reticulum"/>
    <property type="evidence" value="ECO:0000250"/>
    <property type="project" value="UniProtKB"/>
</dbReference>
<dbReference type="GO" id="GO:0004667">
    <property type="term" value="F:prostaglandin-D synthase activity"/>
    <property type="evidence" value="ECO:0000250"/>
    <property type="project" value="UniProtKB"/>
</dbReference>
<dbReference type="GO" id="GO:0005501">
    <property type="term" value="F:retinoid binding"/>
    <property type="evidence" value="ECO:0000250"/>
    <property type="project" value="UniProtKB"/>
</dbReference>
<dbReference type="GO" id="GO:0036094">
    <property type="term" value="F:small molecule binding"/>
    <property type="evidence" value="ECO:0007669"/>
    <property type="project" value="InterPro"/>
</dbReference>
<dbReference type="GO" id="GO:0043303">
    <property type="term" value="P:mast cell degranulation"/>
    <property type="evidence" value="ECO:0007669"/>
    <property type="project" value="UniProtKB-KW"/>
</dbReference>
<dbReference type="GO" id="GO:0001516">
    <property type="term" value="P:prostaglandin biosynthetic process"/>
    <property type="evidence" value="ECO:0000250"/>
    <property type="project" value="UniProtKB"/>
</dbReference>
<dbReference type="GO" id="GO:0045187">
    <property type="term" value="P:regulation of circadian sleep/wake cycle, sleep"/>
    <property type="evidence" value="ECO:0000250"/>
    <property type="project" value="UniProtKB"/>
</dbReference>
<dbReference type="FunFam" id="2.40.128.20:FF:000010">
    <property type="entry name" value="Prostaglandin-H2 D-isomerase"/>
    <property type="match status" value="1"/>
</dbReference>
<dbReference type="Gene3D" id="2.40.128.20">
    <property type="match status" value="1"/>
</dbReference>
<dbReference type="InterPro" id="IPR012674">
    <property type="entry name" value="Calycin"/>
</dbReference>
<dbReference type="InterPro" id="IPR002345">
    <property type="entry name" value="Lipocalin"/>
</dbReference>
<dbReference type="InterPro" id="IPR000566">
    <property type="entry name" value="Lipocln_cytosolic_FA-bd_dom"/>
</dbReference>
<dbReference type="PANTHER" id="PTHR11430">
    <property type="entry name" value="LIPOCALIN"/>
    <property type="match status" value="1"/>
</dbReference>
<dbReference type="PANTHER" id="PTHR11430:SF86">
    <property type="entry name" value="PROSTAGLANDIN-H2 D-ISOMERASE"/>
    <property type="match status" value="1"/>
</dbReference>
<dbReference type="Pfam" id="PF00061">
    <property type="entry name" value="Lipocalin"/>
    <property type="match status" value="1"/>
</dbReference>
<dbReference type="PRINTS" id="PR00179">
    <property type="entry name" value="LIPOCALIN"/>
</dbReference>
<dbReference type="PRINTS" id="PR01254">
    <property type="entry name" value="PGNDSYNTHASE"/>
</dbReference>
<dbReference type="SUPFAM" id="SSF50814">
    <property type="entry name" value="Lipocalins"/>
    <property type="match status" value="1"/>
</dbReference>
<reference key="1">
    <citation type="journal article" date="2002" name="Biol. Reprod.">
        <title>Mammalian lipocalin-type prostaglandin D2 synthase in the fluids of the male genital tract: putative biochemical and physiological functions.</title>
        <authorList>
            <person name="Fouchecourt S."/>
            <person name="Charpigny G."/>
            <person name="Reinaud P."/>
            <person name="Dumont P."/>
            <person name="Dacheux J.-L."/>
        </authorList>
    </citation>
    <scope>NUCLEOTIDE SEQUENCE [MRNA]</scope>
    <scope>FUNCTION</scope>
</reference>
<reference key="2">
    <citation type="journal article" date="1999" name="Biol. Reprod.">
        <title>Glutathione-independent prostaglandin D2 synthase in ram and stallion epididymal fluids: origin and regulation.</title>
        <authorList>
            <person name="Fouchecourt S."/>
            <person name="Dacheux F."/>
            <person name="Dacheux J.-L."/>
        </authorList>
    </citation>
    <scope>PROTEIN SEQUENCE OF 29-45; 63-68 AND 100-107</scope>
    <scope>TISSUE SPECIFICITY</scope>
</reference>
<reference key="3">
    <citation type="journal article" date="1996" name="Biochim. Biophys. Acta">
        <title>Astrocytes synthesize and secrete prostaglandin D synthetase in vitro.</title>
        <authorList>
            <person name="Giacomelli S."/>
            <person name="Leone M.-G."/>
            <person name="Grima J."/>
            <person name="Silvestrini B."/>
            <person name="Cheng C.Y."/>
        </authorList>
    </citation>
    <scope>TISSUE SPECIFICITY</scope>
</reference>
<reference key="4">
    <citation type="journal article" date="2003" name="Biol. Reprod.">
        <title>Prostaglandin d(2) synthase secreted in the caput epididymidis displays spatial and temporal delay between messenger RNA and protein expression during postnatal development.</title>
        <authorList>
            <person name="Fouchecourt S."/>
            <person name="Castella S."/>
            <person name="Dacheux F."/>
            <person name="Dacheux J.-L."/>
        </authorList>
    </citation>
    <scope>TISSUE SPECIFICITY</scope>
</reference>